<feature type="chain" id="PRO_1000009654" description="Phosphoglycerate kinase">
    <location>
        <begin position="1"/>
        <end position="398"/>
    </location>
</feature>
<feature type="binding site" evidence="1">
    <location>
        <begin position="21"/>
        <end position="23"/>
    </location>
    <ligand>
        <name>substrate</name>
    </ligand>
</feature>
<feature type="binding site" evidence="1">
    <location>
        <position position="36"/>
    </location>
    <ligand>
        <name>substrate</name>
    </ligand>
</feature>
<feature type="binding site" evidence="1">
    <location>
        <begin position="59"/>
        <end position="62"/>
    </location>
    <ligand>
        <name>substrate</name>
    </ligand>
</feature>
<feature type="binding site" evidence="1">
    <location>
        <position position="119"/>
    </location>
    <ligand>
        <name>substrate</name>
    </ligand>
</feature>
<feature type="binding site" evidence="1">
    <location>
        <position position="157"/>
    </location>
    <ligand>
        <name>substrate</name>
    </ligand>
</feature>
<feature type="binding site" evidence="1">
    <location>
        <position position="208"/>
    </location>
    <ligand>
        <name>ATP</name>
        <dbReference type="ChEBI" id="CHEBI:30616"/>
    </ligand>
</feature>
<feature type="binding site" evidence="1">
    <location>
        <position position="296"/>
    </location>
    <ligand>
        <name>ATP</name>
        <dbReference type="ChEBI" id="CHEBI:30616"/>
    </ligand>
</feature>
<feature type="binding site" evidence="1">
    <location>
        <position position="327"/>
    </location>
    <ligand>
        <name>ATP</name>
        <dbReference type="ChEBI" id="CHEBI:30616"/>
    </ligand>
</feature>
<feature type="binding site" evidence="1">
    <location>
        <begin position="354"/>
        <end position="357"/>
    </location>
    <ligand>
        <name>ATP</name>
        <dbReference type="ChEBI" id="CHEBI:30616"/>
    </ligand>
</feature>
<feature type="helix" evidence="2">
    <location>
        <begin position="6"/>
        <end position="8"/>
    </location>
</feature>
<feature type="strand" evidence="2">
    <location>
        <begin position="15"/>
        <end position="19"/>
    </location>
</feature>
<feature type="strand" evidence="2">
    <location>
        <begin position="30"/>
        <end position="32"/>
    </location>
</feature>
<feature type="helix" evidence="2">
    <location>
        <begin position="35"/>
        <end position="49"/>
    </location>
</feature>
<feature type="strand" evidence="2">
    <location>
        <begin position="53"/>
        <end position="57"/>
    </location>
</feature>
<feature type="helix" evidence="2">
    <location>
        <begin position="66"/>
        <end position="68"/>
    </location>
</feature>
<feature type="helix" evidence="2">
    <location>
        <begin position="75"/>
        <end position="85"/>
    </location>
</feature>
<feature type="strand" evidence="2">
    <location>
        <begin position="95"/>
        <end position="97"/>
    </location>
</feature>
<feature type="helix" evidence="2">
    <location>
        <begin position="98"/>
        <end position="105"/>
    </location>
</feature>
<feature type="strand" evidence="2">
    <location>
        <begin position="112"/>
        <end position="114"/>
    </location>
</feature>
<feature type="helix" evidence="2">
    <location>
        <begin position="118"/>
        <end position="122"/>
    </location>
</feature>
<feature type="turn" evidence="2">
    <location>
        <begin position="123"/>
        <end position="125"/>
    </location>
</feature>
<feature type="turn" evidence="2">
    <location>
        <begin position="127"/>
        <end position="131"/>
    </location>
</feature>
<feature type="helix" evidence="2">
    <location>
        <begin position="133"/>
        <end position="141"/>
    </location>
</feature>
<feature type="strand" evidence="2">
    <location>
        <begin position="143"/>
        <end position="149"/>
    </location>
</feature>
<feature type="helix" evidence="2">
    <location>
        <begin position="152"/>
        <end position="154"/>
    </location>
</feature>
<feature type="turn" evidence="2">
    <location>
        <begin position="160"/>
        <end position="162"/>
    </location>
</feature>
<feature type="helix" evidence="2">
    <location>
        <begin position="163"/>
        <end position="166"/>
    </location>
</feature>
<feature type="strand" evidence="2">
    <location>
        <begin position="169"/>
        <end position="174"/>
    </location>
</feature>
<feature type="helix" evidence="2">
    <location>
        <begin position="176"/>
        <end position="185"/>
    </location>
</feature>
<feature type="helix" evidence="2">
    <location>
        <begin position="187"/>
        <end position="190"/>
    </location>
</feature>
<feature type="strand" evidence="2">
    <location>
        <begin position="194"/>
        <end position="200"/>
    </location>
</feature>
<feature type="turn" evidence="2">
    <location>
        <begin position="206"/>
        <end position="208"/>
    </location>
</feature>
<feature type="helix" evidence="2">
    <location>
        <begin position="209"/>
        <end position="218"/>
    </location>
</feature>
<feature type="strand" evidence="2">
    <location>
        <begin position="220"/>
        <end position="224"/>
    </location>
</feature>
<feature type="helix" evidence="2">
    <location>
        <begin position="228"/>
        <end position="235"/>
    </location>
</feature>
<feature type="helix" evidence="2">
    <location>
        <begin position="247"/>
        <end position="249"/>
    </location>
</feature>
<feature type="helix" evidence="2">
    <location>
        <begin position="250"/>
        <end position="259"/>
    </location>
</feature>
<feature type="strand" evidence="2">
    <location>
        <begin position="270"/>
        <end position="278"/>
    </location>
</feature>
<feature type="strand" evidence="2">
    <location>
        <begin position="282"/>
        <end position="284"/>
    </location>
</feature>
<feature type="strand" evidence="2">
    <location>
        <begin position="286"/>
        <end position="288"/>
    </location>
</feature>
<feature type="strand" evidence="2">
    <location>
        <begin position="295"/>
        <end position="299"/>
    </location>
</feature>
<feature type="helix" evidence="2">
    <location>
        <begin position="301"/>
        <end position="311"/>
    </location>
</feature>
<feature type="strand" evidence="2">
    <location>
        <begin position="315"/>
        <end position="321"/>
    </location>
</feature>
<feature type="helix" evidence="2">
    <location>
        <begin position="329"/>
        <end position="331"/>
    </location>
</feature>
<feature type="helix" evidence="2">
    <location>
        <begin position="333"/>
        <end position="343"/>
    </location>
</feature>
<feature type="strand" evidence="2">
    <location>
        <begin position="349"/>
        <end position="352"/>
    </location>
</feature>
<feature type="helix" evidence="2">
    <location>
        <begin position="355"/>
        <end position="363"/>
    </location>
</feature>
<feature type="helix" evidence="2">
    <location>
        <begin position="367"/>
        <end position="369"/>
    </location>
</feature>
<feature type="strand" evidence="2">
    <location>
        <begin position="370"/>
        <end position="373"/>
    </location>
</feature>
<feature type="helix" evidence="2">
    <location>
        <begin position="378"/>
        <end position="384"/>
    </location>
</feature>
<feature type="helix" evidence="2">
    <location>
        <begin position="390"/>
        <end position="393"/>
    </location>
</feature>
<organism>
    <name type="scientific">Streptococcus pneumoniae serotype 2 (strain D39 / NCTC 7466)</name>
    <dbReference type="NCBI Taxonomy" id="373153"/>
    <lineage>
        <taxon>Bacteria</taxon>
        <taxon>Bacillati</taxon>
        <taxon>Bacillota</taxon>
        <taxon>Bacilli</taxon>
        <taxon>Lactobacillales</taxon>
        <taxon>Streptococcaceae</taxon>
        <taxon>Streptococcus</taxon>
    </lineage>
</organism>
<accession>Q04LZ5</accession>
<sequence length="398" mass="41939">MAKLTVKDVDLKGKKVLVRVDFNVPLKDGVITNDNRITAALPTIKYIIEQGGRAILFSHLGRVKEESDKAGKSLAPVAADLAAKLGQDVVFPGVTRGAELEAAINALEDGQVLLVENTRYEDVDGKKESKNDPELGKYWASLGDGIFVNDAFGTAHRAHASNVGISANVEKAVAGFLLENEIAYIQEAVETPERPFVAILGGSKVSDKIGVIENLLEKADKVLIGGGMTYTFYKAQGIEIGNSLVEEDKLDVAKALLEKANGKLILPVDSKEANAFAGYTEVRDTEGEAVSEGFLGLDIGPKSIAKFDEALTGAKTVVWNGPMGVFENPDFQAGTIGVMDAIVKQPGVKSIIGGGDSAAAAINLGRADKFSWISTGGGASMELLEGKVLPGLAALTEK</sequence>
<gene>
    <name evidence="1" type="primary">pgk</name>
    <name type="ordered locus">SPD_0445</name>
</gene>
<comment type="catalytic activity">
    <reaction evidence="1">
        <text>(2R)-3-phosphoglycerate + ATP = (2R)-3-phospho-glyceroyl phosphate + ADP</text>
        <dbReference type="Rhea" id="RHEA:14801"/>
        <dbReference type="ChEBI" id="CHEBI:30616"/>
        <dbReference type="ChEBI" id="CHEBI:57604"/>
        <dbReference type="ChEBI" id="CHEBI:58272"/>
        <dbReference type="ChEBI" id="CHEBI:456216"/>
        <dbReference type="EC" id="2.7.2.3"/>
    </reaction>
</comment>
<comment type="pathway">
    <text evidence="1">Carbohydrate degradation; glycolysis; pyruvate from D-glyceraldehyde 3-phosphate: step 2/5.</text>
</comment>
<comment type="subunit">
    <text evidence="1">Monomer.</text>
</comment>
<comment type="subcellular location">
    <subcellularLocation>
        <location evidence="1">Cytoplasm</location>
    </subcellularLocation>
</comment>
<comment type="similarity">
    <text evidence="1">Belongs to the phosphoglycerate kinase family.</text>
</comment>
<dbReference type="EC" id="2.7.2.3" evidence="1"/>
<dbReference type="EMBL" id="CP000410">
    <property type="protein sequence ID" value="ABJ54881.1"/>
    <property type="molecule type" value="Genomic_DNA"/>
</dbReference>
<dbReference type="RefSeq" id="WP_001096759.1">
    <property type="nucleotide sequence ID" value="NZ_JAMLJR010000009.1"/>
</dbReference>
<dbReference type="PDB" id="3ZLB">
    <property type="method" value="X-ray"/>
    <property type="resolution" value="1.78 A"/>
    <property type="chains" value="A=1-398"/>
</dbReference>
<dbReference type="PDBsum" id="3ZLB"/>
<dbReference type="SMR" id="Q04LZ5"/>
<dbReference type="PaxDb" id="373153-SPD_0445"/>
<dbReference type="KEGG" id="spd:SPD_0445"/>
<dbReference type="eggNOG" id="COG0126">
    <property type="taxonomic scope" value="Bacteria"/>
</dbReference>
<dbReference type="HOGENOM" id="CLU_025427_0_1_9"/>
<dbReference type="BioCyc" id="SPNE373153:G1G6V-486-MONOMER"/>
<dbReference type="UniPathway" id="UPA00109">
    <property type="reaction ID" value="UER00185"/>
</dbReference>
<dbReference type="EvolutionaryTrace" id="Q04LZ5"/>
<dbReference type="Proteomes" id="UP000001452">
    <property type="component" value="Chromosome"/>
</dbReference>
<dbReference type="GO" id="GO:0009986">
    <property type="term" value="C:cell surface"/>
    <property type="evidence" value="ECO:0000314"/>
    <property type="project" value="CAFA"/>
</dbReference>
<dbReference type="GO" id="GO:0005829">
    <property type="term" value="C:cytosol"/>
    <property type="evidence" value="ECO:0007669"/>
    <property type="project" value="TreeGrafter"/>
</dbReference>
<dbReference type="GO" id="GO:0009274">
    <property type="term" value="C:peptidoglycan-based cell wall"/>
    <property type="evidence" value="ECO:0000314"/>
    <property type="project" value="CAFA"/>
</dbReference>
<dbReference type="GO" id="GO:0043531">
    <property type="term" value="F:ADP binding"/>
    <property type="evidence" value="ECO:0007669"/>
    <property type="project" value="TreeGrafter"/>
</dbReference>
<dbReference type="GO" id="GO:0043532">
    <property type="term" value="F:angiostatin binding"/>
    <property type="evidence" value="ECO:0000353"/>
    <property type="project" value="CAFA"/>
</dbReference>
<dbReference type="GO" id="GO:0005524">
    <property type="term" value="F:ATP binding"/>
    <property type="evidence" value="ECO:0007669"/>
    <property type="project" value="UniProtKB-KW"/>
</dbReference>
<dbReference type="GO" id="GO:0004618">
    <property type="term" value="F:phosphoglycerate kinase activity"/>
    <property type="evidence" value="ECO:0007669"/>
    <property type="project" value="UniProtKB-UniRule"/>
</dbReference>
<dbReference type="GO" id="GO:0002020">
    <property type="term" value="F:protease binding"/>
    <property type="evidence" value="ECO:0000353"/>
    <property type="project" value="CAFA"/>
</dbReference>
<dbReference type="GO" id="GO:0006094">
    <property type="term" value="P:gluconeogenesis"/>
    <property type="evidence" value="ECO:0007669"/>
    <property type="project" value="TreeGrafter"/>
</dbReference>
<dbReference type="GO" id="GO:0006096">
    <property type="term" value="P:glycolytic process"/>
    <property type="evidence" value="ECO:0007669"/>
    <property type="project" value="UniProtKB-UniRule"/>
</dbReference>
<dbReference type="GO" id="GO:0051919">
    <property type="term" value="P:positive regulation of fibrinolysis"/>
    <property type="evidence" value="ECO:0000353"/>
    <property type="project" value="CAFA"/>
</dbReference>
<dbReference type="GO" id="GO:0010756">
    <property type="term" value="P:positive regulation of plasminogen activation"/>
    <property type="evidence" value="ECO:0000353"/>
    <property type="project" value="CAFA"/>
</dbReference>
<dbReference type="FunFam" id="3.40.50.1260:FF:000001">
    <property type="entry name" value="Phosphoglycerate kinase"/>
    <property type="match status" value="1"/>
</dbReference>
<dbReference type="FunFam" id="3.40.50.1260:FF:000008">
    <property type="entry name" value="Phosphoglycerate kinase"/>
    <property type="match status" value="1"/>
</dbReference>
<dbReference type="Gene3D" id="3.40.50.1260">
    <property type="entry name" value="Phosphoglycerate kinase, N-terminal domain"/>
    <property type="match status" value="2"/>
</dbReference>
<dbReference type="HAMAP" id="MF_00145">
    <property type="entry name" value="Phosphoglyc_kinase"/>
    <property type="match status" value="1"/>
</dbReference>
<dbReference type="InterPro" id="IPR001576">
    <property type="entry name" value="Phosphoglycerate_kinase"/>
</dbReference>
<dbReference type="InterPro" id="IPR015911">
    <property type="entry name" value="Phosphoglycerate_kinase_CS"/>
</dbReference>
<dbReference type="InterPro" id="IPR015824">
    <property type="entry name" value="Phosphoglycerate_kinase_N"/>
</dbReference>
<dbReference type="InterPro" id="IPR036043">
    <property type="entry name" value="Phosphoglycerate_kinase_sf"/>
</dbReference>
<dbReference type="PANTHER" id="PTHR11406">
    <property type="entry name" value="PHOSPHOGLYCERATE KINASE"/>
    <property type="match status" value="1"/>
</dbReference>
<dbReference type="PANTHER" id="PTHR11406:SF23">
    <property type="entry name" value="PHOSPHOGLYCERATE KINASE 1, CHLOROPLASTIC-RELATED"/>
    <property type="match status" value="1"/>
</dbReference>
<dbReference type="Pfam" id="PF00162">
    <property type="entry name" value="PGK"/>
    <property type="match status" value="1"/>
</dbReference>
<dbReference type="PIRSF" id="PIRSF000724">
    <property type="entry name" value="Pgk"/>
    <property type="match status" value="1"/>
</dbReference>
<dbReference type="PRINTS" id="PR00477">
    <property type="entry name" value="PHGLYCKINASE"/>
</dbReference>
<dbReference type="SUPFAM" id="SSF53748">
    <property type="entry name" value="Phosphoglycerate kinase"/>
    <property type="match status" value="1"/>
</dbReference>
<dbReference type="PROSITE" id="PS00111">
    <property type="entry name" value="PGLYCERATE_KINASE"/>
    <property type="match status" value="1"/>
</dbReference>
<keyword id="KW-0002">3D-structure</keyword>
<keyword id="KW-0067">ATP-binding</keyword>
<keyword id="KW-0963">Cytoplasm</keyword>
<keyword id="KW-0324">Glycolysis</keyword>
<keyword id="KW-0418">Kinase</keyword>
<keyword id="KW-0547">Nucleotide-binding</keyword>
<keyword id="KW-1185">Reference proteome</keyword>
<keyword id="KW-0808">Transferase</keyword>
<protein>
    <recommendedName>
        <fullName evidence="1">Phosphoglycerate kinase</fullName>
        <ecNumber evidence="1">2.7.2.3</ecNumber>
    </recommendedName>
</protein>
<evidence type="ECO:0000255" key="1">
    <source>
        <dbReference type="HAMAP-Rule" id="MF_00145"/>
    </source>
</evidence>
<evidence type="ECO:0007829" key="2">
    <source>
        <dbReference type="PDB" id="3ZLB"/>
    </source>
</evidence>
<proteinExistence type="evidence at protein level"/>
<name>PGK_STRP2</name>
<reference key="1">
    <citation type="journal article" date="2007" name="J. Bacteriol.">
        <title>Genome sequence of Avery's virulent serotype 2 strain D39 of Streptococcus pneumoniae and comparison with that of unencapsulated laboratory strain R6.</title>
        <authorList>
            <person name="Lanie J.A."/>
            <person name="Ng W.-L."/>
            <person name="Kazmierczak K.M."/>
            <person name="Andrzejewski T.M."/>
            <person name="Davidsen T.M."/>
            <person name="Wayne K.J."/>
            <person name="Tettelin H."/>
            <person name="Glass J.I."/>
            <person name="Winkler M.E."/>
        </authorList>
    </citation>
    <scope>NUCLEOTIDE SEQUENCE [LARGE SCALE GENOMIC DNA]</scope>
    <source>
        <strain>D39 / NCTC 7466</strain>
    </source>
</reference>